<keyword id="KW-0028">Amino-acid biosynthesis</keyword>
<keyword id="KW-0368">Histidine biosynthesis</keyword>
<keyword id="KW-0378">Hydrolase</keyword>
<keyword id="KW-0486">Methionine biosynthesis</keyword>
<keyword id="KW-0511">Multifunctional enzyme</keyword>
<keyword id="KW-0521">NADP</keyword>
<keyword id="KW-0554">One-carbon metabolism</keyword>
<keyword id="KW-0560">Oxidoreductase</keyword>
<keyword id="KW-0658">Purine biosynthesis</keyword>
<evidence type="ECO:0000255" key="1">
    <source>
        <dbReference type="HAMAP-Rule" id="MF_01576"/>
    </source>
</evidence>
<protein>
    <recommendedName>
        <fullName evidence="1">Bifunctional protein FolD</fullName>
    </recommendedName>
    <domain>
        <recommendedName>
            <fullName evidence="1">Methylenetetrahydrofolate dehydrogenase</fullName>
            <ecNumber evidence="1">1.5.1.5</ecNumber>
        </recommendedName>
    </domain>
    <domain>
        <recommendedName>
            <fullName evidence="1">Methenyltetrahydrofolate cyclohydrolase</fullName>
            <ecNumber evidence="1">3.5.4.9</ecNumber>
        </recommendedName>
    </domain>
</protein>
<reference key="1">
    <citation type="submission" date="2006-09" db="EMBL/GenBank/DDBJ databases">
        <title>Complete sequence of chromosome 1 of Shewanella sp. ANA-3.</title>
        <authorList>
            <person name="Copeland A."/>
            <person name="Lucas S."/>
            <person name="Lapidus A."/>
            <person name="Barry K."/>
            <person name="Detter J.C."/>
            <person name="Glavina del Rio T."/>
            <person name="Hammon N."/>
            <person name="Israni S."/>
            <person name="Dalin E."/>
            <person name="Tice H."/>
            <person name="Pitluck S."/>
            <person name="Chertkov O."/>
            <person name="Brettin T."/>
            <person name="Bruce D."/>
            <person name="Han C."/>
            <person name="Tapia R."/>
            <person name="Gilna P."/>
            <person name="Schmutz J."/>
            <person name="Larimer F."/>
            <person name="Land M."/>
            <person name="Hauser L."/>
            <person name="Kyrpides N."/>
            <person name="Kim E."/>
            <person name="Newman D."/>
            <person name="Salticov C."/>
            <person name="Konstantinidis K."/>
            <person name="Klappenback J."/>
            <person name="Tiedje J."/>
            <person name="Richardson P."/>
        </authorList>
    </citation>
    <scope>NUCLEOTIDE SEQUENCE [LARGE SCALE GENOMIC DNA]</scope>
    <source>
        <strain>ANA-3</strain>
    </source>
</reference>
<comment type="function">
    <text evidence="1">Catalyzes the oxidation of 5,10-methylenetetrahydrofolate to 5,10-methenyltetrahydrofolate and then the hydrolysis of 5,10-methenyltetrahydrofolate to 10-formyltetrahydrofolate.</text>
</comment>
<comment type="catalytic activity">
    <reaction evidence="1">
        <text>(6R)-5,10-methylene-5,6,7,8-tetrahydrofolate + NADP(+) = (6R)-5,10-methenyltetrahydrofolate + NADPH</text>
        <dbReference type="Rhea" id="RHEA:22812"/>
        <dbReference type="ChEBI" id="CHEBI:15636"/>
        <dbReference type="ChEBI" id="CHEBI:57455"/>
        <dbReference type="ChEBI" id="CHEBI:57783"/>
        <dbReference type="ChEBI" id="CHEBI:58349"/>
        <dbReference type="EC" id="1.5.1.5"/>
    </reaction>
</comment>
<comment type="catalytic activity">
    <reaction evidence="1">
        <text>(6R)-5,10-methenyltetrahydrofolate + H2O = (6R)-10-formyltetrahydrofolate + H(+)</text>
        <dbReference type="Rhea" id="RHEA:23700"/>
        <dbReference type="ChEBI" id="CHEBI:15377"/>
        <dbReference type="ChEBI" id="CHEBI:15378"/>
        <dbReference type="ChEBI" id="CHEBI:57455"/>
        <dbReference type="ChEBI" id="CHEBI:195366"/>
        <dbReference type="EC" id="3.5.4.9"/>
    </reaction>
</comment>
<comment type="pathway">
    <text evidence="1">One-carbon metabolism; tetrahydrofolate interconversion.</text>
</comment>
<comment type="subunit">
    <text evidence="1">Homodimer.</text>
</comment>
<comment type="similarity">
    <text evidence="1">Belongs to the tetrahydrofolate dehydrogenase/cyclohydrolase family.</text>
</comment>
<gene>
    <name evidence="1" type="primary">folD</name>
    <name type="ordered locus">Shewana3_2663</name>
</gene>
<organism>
    <name type="scientific">Shewanella sp. (strain ANA-3)</name>
    <dbReference type="NCBI Taxonomy" id="94122"/>
    <lineage>
        <taxon>Bacteria</taxon>
        <taxon>Pseudomonadati</taxon>
        <taxon>Pseudomonadota</taxon>
        <taxon>Gammaproteobacteria</taxon>
        <taxon>Alteromonadales</taxon>
        <taxon>Shewanellaceae</taxon>
        <taxon>Shewanella</taxon>
    </lineage>
</organism>
<name>FOLD_SHESA</name>
<dbReference type="EC" id="1.5.1.5" evidence="1"/>
<dbReference type="EC" id="3.5.4.9" evidence="1"/>
<dbReference type="EMBL" id="CP000469">
    <property type="protein sequence ID" value="ABK48890.1"/>
    <property type="molecule type" value="Genomic_DNA"/>
</dbReference>
<dbReference type="RefSeq" id="WP_011623249.1">
    <property type="nucleotide sequence ID" value="NC_008577.1"/>
</dbReference>
<dbReference type="SMR" id="A0KYM1"/>
<dbReference type="STRING" id="94122.Shewana3_2663"/>
<dbReference type="KEGG" id="shn:Shewana3_2663"/>
<dbReference type="eggNOG" id="COG0190">
    <property type="taxonomic scope" value="Bacteria"/>
</dbReference>
<dbReference type="HOGENOM" id="CLU_034045_2_1_6"/>
<dbReference type="OrthoDB" id="9803580at2"/>
<dbReference type="UniPathway" id="UPA00193"/>
<dbReference type="Proteomes" id="UP000002589">
    <property type="component" value="Chromosome"/>
</dbReference>
<dbReference type="GO" id="GO:0005829">
    <property type="term" value="C:cytosol"/>
    <property type="evidence" value="ECO:0007669"/>
    <property type="project" value="TreeGrafter"/>
</dbReference>
<dbReference type="GO" id="GO:0004477">
    <property type="term" value="F:methenyltetrahydrofolate cyclohydrolase activity"/>
    <property type="evidence" value="ECO:0007669"/>
    <property type="project" value="UniProtKB-UniRule"/>
</dbReference>
<dbReference type="GO" id="GO:0004488">
    <property type="term" value="F:methylenetetrahydrofolate dehydrogenase (NADP+) activity"/>
    <property type="evidence" value="ECO:0007669"/>
    <property type="project" value="UniProtKB-UniRule"/>
</dbReference>
<dbReference type="GO" id="GO:0000105">
    <property type="term" value="P:L-histidine biosynthetic process"/>
    <property type="evidence" value="ECO:0007669"/>
    <property type="project" value="UniProtKB-KW"/>
</dbReference>
<dbReference type="GO" id="GO:0009086">
    <property type="term" value="P:methionine biosynthetic process"/>
    <property type="evidence" value="ECO:0007669"/>
    <property type="project" value="UniProtKB-KW"/>
</dbReference>
<dbReference type="GO" id="GO:0006164">
    <property type="term" value="P:purine nucleotide biosynthetic process"/>
    <property type="evidence" value="ECO:0007669"/>
    <property type="project" value="UniProtKB-KW"/>
</dbReference>
<dbReference type="GO" id="GO:0035999">
    <property type="term" value="P:tetrahydrofolate interconversion"/>
    <property type="evidence" value="ECO:0007669"/>
    <property type="project" value="UniProtKB-UniRule"/>
</dbReference>
<dbReference type="CDD" id="cd01080">
    <property type="entry name" value="NAD_bind_m-THF_DH_Cyclohyd"/>
    <property type="match status" value="1"/>
</dbReference>
<dbReference type="FunFam" id="3.40.50.10860:FF:000001">
    <property type="entry name" value="Bifunctional protein FolD"/>
    <property type="match status" value="1"/>
</dbReference>
<dbReference type="FunFam" id="3.40.50.720:FF:000006">
    <property type="entry name" value="Bifunctional protein FolD"/>
    <property type="match status" value="1"/>
</dbReference>
<dbReference type="Gene3D" id="3.40.50.10860">
    <property type="entry name" value="Leucine Dehydrogenase, chain A, domain 1"/>
    <property type="match status" value="1"/>
</dbReference>
<dbReference type="Gene3D" id="3.40.50.720">
    <property type="entry name" value="NAD(P)-binding Rossmann-like Domain"/>
    <property type="match status" value="1"/>
</dbReference>
<dbReference type="HAMAP" id="MF_01576">
    <property type="entry name" value="THF_DHG_CYH"/>
    <property type="match status" value="1"/>
</dbReference>
<dbReference type="InterPro" id="IPR046346">
    <property type="entry name" value="Aminoacid_DH-like_N_sf"/>
</dbReference>
<dbReference type="InterPro" id="IPR036291">
    <property type="entry name" value="NAD(P)-bd_dom_sf"/>
</dbReference>
<dbReference type="InterPro" id="IPR000672">
    <property type="entry name" value="THF_DH/CycHdrlase"/>
</dbReference>
<dbReference type="InterPro" id="IPR020630">
    <property type="entry name" value="THF_DH/CycHdrlase_cat_dom"/>
</dbReference>
<dbReference type="InterPro" id="IPR020867">
    <property type="entry name" value="THF_DH/CycHdrlase_CS"/>
</dbReference>
<dbReference type="InterPro" id="IPR020631">
    <property type="entry name" value="THF_DH/CycHdrlase_NAD-bd_dom"/>
</dbReference>
<dbReference type="NCBIfam" id="NF008058">
    <property type="entry name" value="PRK10792.1"/>
    <property type="match status" value="1"/>
</dbReference>
<dbReference type="NCBIfam" id="NF010783">
    <property type="entry name" value="PRK14186.1"/>
    <property type="match status" value="1"/>
</dbReference>
<dbReference type="PANTHER" id="PTHR48099:SF5">
    <property type="entry name" value="C-1-TETRAHYDROFOLATE SYNTHASE, CYTOPLASMIC"/>
    <property type="match status" value="1"/>
</dbReference>
<dbReference type="PANTHER" id="PTHR48099">
    <property type="entry name" value="C-1-TETRAHYDROFOLATE SYNTHASE, CYTOPLASMIC-RELATED"/>
    <property type="match status" value="1"/>
</dbReference>
<dbReference type="Pfam" id="PF00763">
    <property type="entry name" value="THF_DHG_CYH"/>
    <property type="match status" value="1"/>
</dbReference>
<dbReference type="Pfam" id="PF02882">
    <property type="entry name" value="THF_DHG_CYH_C"/>
    <property type="match status" value="1"/>
</dbReference>
<dbReference type="PRINTS" id="PR00085">
    <property type="entry name" value="THFDHDRGNASE"/>
</dbReference>
<dbReference type="SUPFAM" id="SSF53223">
    <property type="entry name" value="Aminoacid dehydrogenase-like, N-terminal domain"/>
    <property type="match status" value="1"/>
</dbReference>
<dbReference type="SUPFAM" id="SSF51735">
    <property type="entry name" value="NAD(P)-binding Rossmann-fold domains"/>
    <property type="match status" value="1"/>
</dbReference>
<dbReference type="PROSITE" id="PS00767">
    <property type="entry name" value="THF_DHG_CYH_2"/>
    <property type="match status" value="1"/>
</dbReference>
<feature type="chain" id="PRO_0000305878" description="Bifunctional protein FolD">
    <location>
        <begin position="1"/>
        <end position="284"/>
    </location>
</feature>
<feature type="binding site" evidence="1">
    <location>
        <begin position="166"/>
        <end position="168"/>
    </location>
    <ligand>
        <name>NADP(+)</name>
        <dbReference type="ChEBI" id="CHEBI:58349"/>
    </ligand>
</feature>
<feature type="binding site" evidence="1">
    <location>
        <position position="232"/>
    </location>
    <ligand>
        <name>NADP(+)</name>
        <dbReference type="ChEBI" id="CHEBI:58349"/>
    </ligand>
</feature>
<accession>A0KYM1</accession>
<sequence>MTAQIIDGKAIAQSIRTQLREKVTARKEAGQRVPGLAVILVGADPASQVYVGSKRKACEEVGFISRSYDLDTSYTEEALLALIDELNDDPTIDGILVQLPLPAHIEDSKVIERIRPDKDVDGFHPYNVGRLAQRIPVLRSCTPMGIMTLIKSTGVDTYGLDAVVVGASNIVGRPMTLELLLAGCTTTTCHRFTKNLEQKIRQADLVVVAVGKPGFIPGEWIKPGAIVIDVGINRLENGTLVGDVQYDVAAQNASFITPVPGGVGPMTIASLLENTLYAAEQYHD</sequence>
<proteinExistence type="inferred from homology"/>